<name>PSBZ_CYAM1</name>
<geneLocation type="chloroplast"/>
<feature type="chain" id="PRO_0000217695" description="Photosystem II reaction center protein Z">
    <location>
        <begin position="1"/>
        <end position="62"/>
    </location>
</feature>
<feature type="transmembrane region" description="Helical" evidence="1">
    <location>
        <begin position="8"/>
        <end position="28"/>
    </location>
</feature>
<feature type="transmembrane region" description="Helical" evidence="1">
    <location>
        <begin position="41"/>
        <end position="61"/>
    </location>
</feature>
<organism>
    <name type="scientific">Cyanidioschyzon merolae (strain NIES-3377 / 10D)</name>
    <name type="common">Unicellular red alga</name>
    <dbReference type="NCBI Taxonomy" id="280699"/>
    <lineage>
        <taxon>Eukaryota</taxon>
        <taxon>Rhodophyta</taxon>
        <taxon>Bangiophyceae</taxon>
        <taxon>Cyanidiales</taxon>
        <taxon>Cyanidiaceae</taxon>
        <taxon>Cyanidioschyzon</taxon>
    </lineage>
</organism>
<accession>Q85FY1</accession>
<sequence>MSIILQILVVALIVYSFVLIVAVPITLSTASGWSKSKSSIVTASIGWVGMVLLTGVLNSFVS</sequence>
<proteinExistence type="inferred from homology"/>
<dbReference type="EMBL" id="AB002583">
    <property type="protein sequence ID" value="BAC76212.1"/>
    <property type="molecule type" value="Genomic_DNA"/>
</dbReference>
<dbReference type="RefSeq" id="NP_849050.1">
    <property type="nucleotide sequence ID" value="NC_004799.1"/>
</dbReference>
<dbReference type="SMR" id="Q85FY1"/>
<dbReference type="STRING" id="280699.Q85FY1"/>
<dbReference type="EnsemblPlants" id="CMV141CT">
    <property type="protein sequence ID" value="CMV141CT"/>
    <property type="gene ID" value="CMV141C"/>
</dbReference>
<dbReference type="GeneID" id="844963"/>
<dbReference type="Gramene" id="CMV141CT">
    <property type="protein sequence ID" value="CMV141CT"/>
    <property type="gene ID" value="CMV141C"/>
</dbReference>
<dbReference type="KEGG" id="cme:CymeCp118"/>
<dbReference type="HOGENOM" id="CLU_195286_1_0_1"/>
<dbReference type="Proteomes" id="UP000007014">
    <property type="component" value="Chloroplast"/>
</dbReference>
<dbReference type="GO" id="GO:0009535">
    <property type="term" value="C:chloroplast thylakoid membrane"/>
    <property type="evidence" value="ECO:0007669"/>
    <property type="project" value="UniProtKB-SubCell"/>
</dbReference>
<dbReference type="GO" id="GO:0009539">
    <property type="term" value="C:photosystem II reaction center"/>
    <property type="evidence" value="ECO:0007669"/>
    <property type="project" value="InterPro"/>
</dbReference>
<dbReference type="GO" id="GO:0015979">
    <property type="term" value="P:photosynthesis"/>
    <property type="evidence" value="ECO:0007669"/>
    <property type="project" value="UniProtKB-UniRule"/>
</dbReference>
<dbReference type="GO" id="GO:0042549">
    <property type="term" value="P:photosystem II stabilization"/>
    <property type="evidence" value="ECO:0007669"/>
    <property type="project" value="InterPro"/>
</dbReference>
<dbReference type="Gene3D" id="1.10.287.740">
    <property type="entry name" value="Photosystem II PsbZ, reaction centre"/>
    <property type="match status" value="1"/>
</dbReference>
<dbReference type="HAMAP" id="MF_00644">
    <property type="entry name" value="PSII_PsbZ"/>
    <property type="match status" value="1"/>
</dbReference>
<dbReference type="InterPro" id="IPR002644">
    <property type="entry name" value="PSII_PsbZ"/>
</dbReference>
<dbReference type="InterPro" id="IPR036512">
    <property type="entry name" value="PSII_PsbZ_sf"/>
</dbReference>
<dbReference type="NCBIfam" id="TIGR03043">
    <property type="entry name" value="PS_II_psbZ"/>
    <property type="match status" value="1"/>
</dbReference>
<dbReference type="PANTHER" id="PTHR34971">
    <property type="entry name" value="PHOTOSYSTEM II REACTION CENTER PROTEIN Z"/>
    <property type="match status" value="1"/>
</dbReference>
<dbReference type="PANTHER" id="PTHR34971:SF2">
    <property type="entry name" value="PHOTOSYSTEM II REACTION CENTER PROTEIN Z"/>
    <property type="match status" value="1"/>
</dbReference>
<dbReference type="Pfam" id="PF01737">
    <property type="entry name" value="Ycf9"/>
    <property type="match status" value="1"/>
</dbReference>
<dbReference type="SUPFAM" id="SSF161055">
    <property type="entry name" value="PsbZ-like"/>
    <property type="match status" value="1"/>
</dbReference>
<protein>
    <recommendedName>
        <fullName evidence="1">Photosystem II reaction center protein Z</fullName>
        <shortName evidence="1">PSII-Z</shortName>
    </recommendedName>
</protein>
<gene>
    <name evidence="1" type="primary">psbZ</name>
</gene>
<reference key="1">
    <citation type="journal article" date="2003" name="DNA Res.">
        <title>Complete sequence and analysis of the plastid genome of the unicellular red alga Cyanidioschyzon merolae.</title>
        <authorList>
            <person name="Ohta N."/>
            <person name="Matsuzaki M."/>
            <person name="Misumi O."/>
            <person name="Miyagishima S.-Y."/>
            <person name="Nozaki H."/>
            <person name="Tanaka K."/>
            <person name="Shin-i T."/>
            <person name="Kohara Y."/>
            <person name="Kuroiwa T."/>
        </authorList>
    </citation>
    <scope>NUCLEOTIDE SEQUENCE [LARGE SCALE GENOMIC DNA]</scope>
    <source>
        <strain>NIES-3377 / 10D</strain>
    </source>
</reference>
<comment type="function">
    <text evidence="1">May control the interaction of photosystem II (PSII) cores with the light-harvesting antenna, regulates electron flow through the 2 photosystem reaction centers. PSII is a light-driven water plastoquinone oxidoreductase, using light energy to abstract electrons from H(2)O, generating a proton gradient subsequently used for ATP formation.</text>
</comment>
<comment type="subunit">
    <text evidence="1">PSII is composed of 1 copy each of membrane proteins PsbA, PsbB, PsbC, PsbD, PsbE, PsbF, PsbH, PsbI, PsbJ, PsbK, PsbL, PsbM, PsbT, PsbX, PsbY, PsbZ, Psb30/Ycf12, at least 3 peripheral proteins of the oxygen-evolving complex and a large number of cofactors. It forms dimeric complexes.</text>
</comment>
<comment type="subcellular location">
    <subcellularLocation>
        <location evidence="1">Plastid</location>
        <location evidence="1">Chloroplast thylakoid membrane</location>
        <topology evidence="1">Multi-pass membrane protein</topology>
    </subcellularLocation>
</comment>
<comment type="similarity">
    <text evidence="1">Belongs to the PsbZ family.</text>
</comment>
<evidence type="ECO:0000255" key="1">
    <source>
        <dbReference type="HAMAP-Rule" id="MF_00644"/>
    </source>
</evidence>
<keyword id="KW-0150">Chloroplast</keyword>
<keyword id="KW-0472">Membrane</keyword>
<keyword id="KW-0602">Photosynthesis</keyword>
<keyword id="KW-0604">Photosystem II</keyword>
<keyword id="KW-0934">Plastid</keyword>
<keyword id="KW-0674">Reaction center</keyword>
<keyword id="KW-1185">Reference proteome</keyword>
<keyword id="KW-0793">Thylakoid</keyword>
<keyword id="KW-0812">Transmembrane</keyword>
<keyword id="KW-1133">Transmembrane helix</keyword>